<proteinExistence type="inferred from homology"/>
<sequence>MSMFCFQCQETAKGTGCILSGVCGKTPEVANMQDLLLFVVRGIAVYNQALRKDGRSSARADKFIFDALFTTITNANFDKHAIIKKIKKGLELKKDLSNQVTIEHAPDECTWYGDETEFEEKAQTVGVLRTSDEDIRSLKELVHYGIKGMAAYVEHAYNLGYENPEIFAFMQYALAELTREDITVDELITLTLATGNHGVQAMAQLDTANTSHYGNPEISEVNIGVRNNPGILVSGHDLKDIEELLQQTEGTGIDIYTHSEMLPAHYYPQLKKYKHLVGNYGNAWWKQKEEFESFNGPILFTTNCIVPPRPNATYKDRIYTTGATGLEGATYIPERKDGKQKDFSVIIEHARRCQPPVAIESGKIVGGFAHAQVIALADKVVEAVKSGAIRKFFVMAGCDGRMKSRSYYTEFAEKLPADTVILTAGCAKYRYNKLPLGDINGIPRVLDAGQCNDSYSLAIIAMKLQEVFGLKDINDLPIVYNIAWYEQKAVIVLLALLALGVKKIHLGPTLPAFLSPNVKQVLIDNFGIGGISTADEDIAKFLA</sequence>
<gene>
    <name evidence="1" type="primary">hcp</name>
    <name type="ordered locus">BF2204</name>
</gene>
<evidence type="ECO:0000255" key="1">
    <source>
        <dbReference type="HAMAP-Rule" id="MF_00069"/>
    </source>
</evidence>
<comment type="function">
    <text evidence="1">Catalyzes the reduction of hydroxylamine to form NH(3) and H(2)O.</text>
</comment>
<comment type="catalytic activity">
    <reaction evidence="1">
        <text>A + NH4(+) + H2O = hydroxylamine + AH2 + H(+)</text>
        <dbReference type="Rhea" id="RHEA:22052"/>
        <dbReference type="ChEBI" id="CHEBI:13193"/>
        <dbReference type="ChEBI" id="CHEBI:15377"/>
        <dbReference type="ChEBI" id="CHEBI:15378"/>
        <dbReference type="ChEBI" id="CHEBI:15429"/>
        <dbReference type="ChEBI" id="CHEBI:17499"/>
        <dbReference type="ChEBI" id="CHEBI:28938"/>
        <dbReference type="EC" id="1.7.99.1"/>
    </reaction>
</comment>
<comment type="cofactor">
    <cofactor evidence="1">
        <name>[4Fe-4S] cluster</name>
        <dbReference type="ChEBI" id="CHEBI:49883"/>
    </cofactor>
    <text evidence="1">Binds 1 [4Fe-4S] cluster.</text>
</comment>
<comment type="cofactor">
    <cofactor evidence="1">
        <name>hybrid [4Fe-2O-2S] cluster</name>
        <dbReference type="ChEBI" id="CHEBI:60519"/>
    </cofactor>
    <text evidence="1">Binds 1 hybrid [4Fe-2O-2S] cluster.</text>
</comment>
<comment type="subcellular location">
    <subcellularLocation>
        <location evidence="1">Cytoplasm</location>
    </subcellularLocation>
</comment>
<comment type="similarity">
    <text evidence="1">Belongs to the HCP family.</text>
</comment>
<reference key="1">
    <citation type="journal article" date="2005" name="Science">
        <title>Extensive DNA inversions in the B. fragilis genome control variable gene expression.</title>
        <authorList>
            <person name="Cerdeno-Tarraga A.-M."/>
            <person name="Patrick S."/>
            <person name="Crossman L.C."/>
            <person name="Blakely G."/>
            <person name="Abratt V."/>
            <person name="Lennard N."/>
            <person name="Poxton I."/>
            <person name="Duerden B."/>
            <person name="Harris B."/>
            <person name="Quail M.A."/>
            <person name="Barron A."/>
            <person name="Clark L."/>
            <person name="Corton C."/>
            <person name="Doggett J."/>
            <person name="Holden M.T.G."/>
            <person name="Larke N."/>
            <person name="Line A."/>
            <person name="Lord A."/>
            <person name="Norbertczak H."/>
            <person name="Ormond D."/>
            <person name="Price C."/>
            <person name="Rabbinowitsch E."/>
            <person name="Woodward J."/>
            <person name="Barrell B.G."/>
            <person name="Parkhill J."/>
        </authorList>
    </citation>
    <scope>NUCLEOTIDE SEQUENCE [LARGE SCALE GENOMIC DNA]</scope>
    <source>
        <strain>ATCC 25285 / DSM 2151 / CCUG 4856 / JCM 11019 / LMG 10263 / NCTC 9343 / Onslow / VPI 2553 / EN-2</strain>
    </source>
</reference>
<feature type="chain" id="PRO_1000009143" description="Hydroxylamine reductase">
    <location>
        <begin position="1"/>
        <end position="543"/>
    </location>
</feature>
<feature type="binding site" evidence="1">
    <location>
        <position position="5"/>
    </location>
    <ligand>
        <name>[4Fe-4S] cluster</name>
        <dbReference type="ChEBI" id="CHEBI:49883"/>
    </ligand>
</feature>
<feature type="binding site" evidence="1">
    <location>
        <position position="8"/>
    </location>
    <ligand>
        <name>[4Fe-4S] cluster</name>
        <dbReference type="ChEBI" id="CHEBI:49883"/>
    </ligand>
</feature>
<feature type="binding site" evidence="1">
    <location>
        <position position="17"/>
    </location>
    <ligand>
        <name>[4Fe-4S] cluster</name>
        <dbReference type="ChEBI" id="CHEBI:49883"/>
    </ligand>
</feature>
<feature type="binding site" evidence="1">
    <location>
        <position position="23"/>
    </location>
    <ligand>
        <name>[4Fe-4S] cluster</name>
        <dbReference type="ChEBI" id="CHEBI:49883"/>
    </ligand>
</feature>
<feature type="binding site" evidence="1">
    <location>
        <position position="236"/>
    </location>
    <ligand>
        <name>hybrid [4Fe-2O-2S] cluster</name>
        <dbReference type="ChEBI" id="CHEBI:60519"/>
    </ligand>
</feature>
<feature type="binding site" evidence="1">
    <location>
        <position position="260"/>
    </location>
    <ligand>
        <name>hybrid [4Fe-2O-2S] cluster</name>
        <dbReference type="ChEBI" id="CHEBI:60519"/>
    </ligand>
</feature>
<feature type="binding site" evidence="1">
    <location>
        <position position="304"/>
    </location>
    <ligand>
        <name>hybrid [4Fe-2O-2S] cluster</name>
        <dbReference type="ChEBI" id="CHEBI:60519"/>
    </ligand>
</feature>
<feature type="binding site" description="via persulfide group" evidence="1">
    <location>
        <position position="398"/>
    </location>
    <ligand>
        <name>hybrid [4Fe-2O-2S] cluster</name>
        <dbReference type="ChEBI" id="CHEBI:60519"/>
    </ligand>
</feature>
<feature type="binding site" evidence="1">
    <location>
        <position position="426"/>
    </location>
    <ligand>
        <name>hybrid [4Fe-2O-2S] cluster</name>
        <dbReference type="ChEBI" id="CHEBI:60519"/>
    </ligand>
</feature>
<feature type="binding site" evidence="1">
    <location>
        <position position="451"/>
    </location>
    <ligand>
        <name>hybrid [4Fe-2O-2S] cluster</name>
        <dbReference type="ChEBI" id="CHEBI:60519"/>
    </ligand>
</feature>
<feature type="binding site" evidence="1">
    <location>
        <position position="486"/>
    </location>
    <ligand>
        <name>hybrid [4Fe-2O-2S] cluster</name>
        <dbReference type="ChEBI" id="CHEBI:60519"/>
    </ligand>
</feature>
<feature type="binding site" evidence="1">
    <location>
        <position position="488"/>
    </location>
    <ligand>
        <name>hybrid [4Fe-2O-2S] cluster</name>
        <dbReference type="ChEBI" id="CHEBI:60519"/>
    </ligand>
</feature>
<feature type="modified residue" description="Cysteine persulfide" evidence="1">
    <location>
        <position position="398"/>
    </location>
</feature>
<name>HCP_BACFN</name>
<protein>
    <recommendedName>
        <fullName evidence="1">Hydroxylamine reductase</fullName>
        <ecNumber evidence="1">1.7.99.1</ecNumber>
    </recommendedName>
    <alternativeName>
        <fullName evidence="1">Hybrid-cluster protein</fullName>
        <shortName evidence="1">HCP</shortName>
    </alternativeName>
    <alternativeName>
        <fullName evidence="1">Prismane protein</fullName>
    </alternativeName>
</protein>
<accession>Q5LDB2</accession>
<organism>
    <name type="scientific">Bacteroides fragilis (strain ATCC 25285 / DSM 2151 / CCUG 4856 / JCM 11019 / LMG 10263 / NCTC 9343 / Onslow / VPI 2553 / EN-2)</name>
    <dbReference type="NCBI Taxonomy" id="272559"/>
    <lineage>
        <taxon>Bacteria</taxon>
        <taxon>Pseudomonadati</taxon>
        <taxon>Bacteroidota</taxon>
        <taxon>Bacteroidia</taxon>
        <taxon>Bacteroidales</taxon>
        <taxon>Bacteroidaceae</taxon>
        <taxon>Bacteroides</taxon>
    </lineage>
</organism>
<keyword id="KW-0004">4Fe-4S</keyword>
<keyword id="KW-0963">Cytoplasm</keyword>
<keyword id="KW-0408">Iron</keyword>
<keyword id="KW-0411">Iron-sulfur</keyword>
<keyword id="KW-0479">Metal-binding</keyword>
<keyword id="KW-0560">Oxidoreductase</keyword>
<dbReference type="EC" id="1.7.99.1" evidence="1"/>
<dbReference type="EMBL" id="CR626927">
    <property type="protein sequence ID" value="CAH07898.1"/>
    <property type="molecule type" value="Genomic_DNA"/>
</dbReference>
<dbReference type="RefSeq" id="WP_024264291.1">
    <property type="nucleotide sequence ID" value="NC_003228.3"/>
</dbReference>
<dbReference type="SMR" id="Q5LDB2"/>
<dbReference type="PaxDb" id="272559-BF9343_2117"/>
<dbReference type="GeneID" id="60367277"/>
<dbReference type="KEGG" id="bfs:BF9343_2117"/>
<dbReference type="eggNOG" id="COG1151">
    <property type="taxonomic scope" value="Bacteria"/>
</dbReference>
<dbReference type="HOGENOM" id="CLU_038344_2_0_10"/>
<dbReference type="Proteomes" id="UP000006731">
    <property type="component" value="Chromosome"/>
</dbReference>
<dbReference type="GO" id="GO:0005737">
    <property type="term" value="C:cytoplasm"/>
    <property type="evidence" value="ECO:0007669"/>
    <property type="project" value="UniProtKB-SubCell"/>
</dbReference>
<dbReference type="GO" id="GO:0051539">
    <property type="term" value="F:4 iron, 4 sulfur cluster binding"/>
    <property type="evidence" value="ECO:0007669"/>
    <property type="project" value="UniProtKB-KW"/>
</dbReference>
<dbReference type="GO" id="GO:0050418">
    <property type="term" value="F:hydroxylamine reductase activity"/>
    <property type="evidence" value="ECO:0007669"/>
    <property type="project" value="UniProtKB-UniRule"/>
</dbReference>
<dbReference type="GO" id="GO:0046872">
    <property type="term" value="F:metal ion binding"/>
    <property type="evidence" value="ECO:0007669"/>
    <property type="project" value="UniProtKB-KW"/>
</dbReference>
<dbReference type="GO" id="GO:0004601">
    <property type="term" value="F:peroxidase activity"/>
    <property type="evidence" value="ECO:0007669"/>
    <property type="project" value="TreeGrafter"/>
</dbReference>
<dbReference type="GO" id="GO:0042542">
    <property type="term" value="P:response to hydrogen peroxide"/>
    <property type="evidence" value="ECO:0007669"/>
    <property type="project" value="TreeGrafter"/>
</dbReference>
<dbReference type="CDD" id="cd01914">
    <property type="entry name" value="HCP"/>
    <property type="match status" value="1"/>
</dbReference>
<dbReference type="FunFam" id="1.20.1270.20:FF:000001">
    <property type="entry name" value="Hydroxylamine reductase"/>
    <property type="match status" value="1"/>
</dbReference>
<dbReference type="FunFam" id="3.40.50.2030:FF:000001">
    <property type="entry name" value="Hydroxylamine reductase"/>
    <property type="match status" value="1"/>
</dbReference>
<dbReference type="FunFam" id="3.40.50.2030:FF:000002">
    <property type="entry name" value="Hydroxylamine reductase"/>
    <property type="match status" value="1"/>
</dbReference>
<dbReference type="Gene3D" id="1.20.1270.20">
    <property type="match status" value="2"/>
</dbReference>
<dbReference type="Gene3D" id="3.40.50.2030">
    <property type="match status" value="2"/>
</dbReference>
<dbReference type="HAMAP" id="MF_00069">
    <property type="entry name" value="Hydroxylam_reduct"/>
    <property type="match status" value="1"/>
</dbReference>
<dbReference type="InterPro" id="IPR004137">
    <property type="entry name" value="HCP/CODH"/>
</dbReference>
<dbReference type="InterPro" id="IPR010048">
    <property type="entry name" value="Hydroxylam_reduct"/>
</dbReference>
<dbReference type="InterPro" id="IPR016099">
    <property type="entry name" value="Prismane-like_a/b-sand"/>
</dbReference>
<dbReference type="InterPro" id="IPR011254">
    <property type="entry name" value="Prismane-like_sf"/>
</dbReference>
<dbReference type="InterPro" id="IPR016100">
    <property type="entry name" value="Prismane_a-bundle"/>
</dbReference>
<dbReference type="NCBIfam" id="TIGR01703">
    <property type="entry name" value="hybrid_clust"/>
    <property type="match status" value="1"/>
</dbReference>
<dbReference type="NCBIfam" id="NF003658">
    <property type="entry name" value="PRK05290.1"/>
    <property type="match status" value="1"/>
</dbReference>
<dbReference type="PANTHER" id="PTHR30109">
    <property type="entry name" value="HYDROXYLAMINE REDUCTASE"/>
    <property type="match status" value="1"/>
</dbReference>
<dbReference type="PANTHER" id="PTHR30109:SF0">
    <property type="entry name" value="HYDROXYLAMINE REDUCTASE"/>
    <property type="match status" value="1"/>
</dbReference>
<dbReference type="Pfam" id="PF03063">
    <property type="entry name" value="Prismane"/>
    <property type="match status" value="1"/>
</dbReference>
<dbReference type="PIRSF" id="PIRSF000076">
    <property type="entry name" value="HCP"/>
    <property type="match status" value="1"/>
</dbReference>
<dbReference type="SUPFAM" id="SSF56821">
    <property type="entry name" value="Prismane protein-like"/>
    <property type="match status" value="1"/>
</dbReference>